<name>Y1104_STAA1</name>
<protein>
    <recommendedName>
        <fullName evidence="1">UPF0358 protein SAHV_1104</fullName>
    </recommendedName>
</protein>
<feature type="chain" id="PRO_1000069004" description="UPF0358 protein SAHV_1104">
    <location>
        <begin position="1"/>
        <end position="91"/>
    </location>
</feature>
<evidence type="ECO:0000255" key="1">
    <source>
        <dbReference type="HAMAP-Rule" id="MF_01560"/>
    </source>
</evidence>
<organism>
    <name type="scientific">Staphylococcus aureus (strain Mu3 / ATCC 700698)</name>
    <dbReference type="NCBI Taxonomy" id="418127"/>
    <lineage>
        <taxon>Bacteria</taxon>
        <taxon>Bacillati</taxon>
        <taxon>Bacillota</taxon>
        <taxon>Bacilli</taxon>
        <taxon>Bacillales</taxon>
        <taxon>Staphylococcaceae</taxon>
        <taxon>Staphylococcus</taxon>
    </lineage>
</organism>
<proteinExistence type="inferred from homology"/>
<sequence length="91" mass="10355">MAKQATMKNAALKQLTKDADEILHLIKVQLDNLTLPSCPLYEEVLDTQMFGLQKEVDFAVKLGLVDREDGKQIMLRLEKELSKLHEAFTLV</sequence>
<comment type="similarity">
    <text evidence="1">Belongs to the UPF0358 family.</text>
</comment>
<accession>A7X122</accession>
<reference key="1">
    <citation type="journal article" date="2008" name="Antimicrob. Agents Chemother.">
        <title>Mutated response regulator graR is responsible for phenotypic conversion of Staphylococcus aureus from heterogeneous vancomycin-intermediate resistance to vancomycin-intermediate resistance.</title>
        <authorList>
            <person name="Neoh H.-M."/>
            <person name="Cui L."/>
            <person name="Yuzawa H."/>
            <person name="Takeuchi F."/>
            <person name="Matsuo M."/>
            <person name="Hiramatsu K."/>
        </authorList>
    </citation>
    <scope>NUCLEOTIDE SEQUENCE [LARGE SCALE GENOMIC DNA]</scope>
    <source>
        <strain>Mu3 / ATCC 700698</strain>
    </source>
</reference>
<gene>
    <name type="ordered locus">SAHV_1104</name>
</gene>
<dbReference type="EMBL" id="AP009324">
    <property type="protein sequence ID" value="BAF77987.1"/>
    <property type="molecule type" value="Genomic_DNA"/>
</dbReference>
<dbReference type="RefSeq" id="WP_001118417.1">
    <property type="nucleotide sequence ID" value="NZ_CTYB01000001.1"/>
</dbReference>
<dbReference type="SMR" id="A7X122"/>
<dbReference type="KEGG" id="saw:SAHV_1104"/>
<dbReference type="HOGENOM" id="CLU_160493_1_0_9"/>
<dbReference type="Gene3D" id="1.10.287.750">
    <property type="entry name" value="SO2669-like"/>
    <property type="match status" value="1"/>
</dbReference>
<dbReference type="HAMAP" id="MF_01560">
    <property type="entry name" value="UPF0358"/>
    <property type="match status" value="1"/>
</dbReference>
<dbReference type="InterPro" id="IPR009983">
    <property type="entry name" value="UPF0358"/>
</dbReference>
<dbReference type="InterPro" id="IPR036270">
    <property type="entry name" value="UPF0358_sf"/>
</dbReference>
<dbReference type="NCBIfam" id="NF010187">
    <property type="entry name" value="PRK13666.1"/>
    <property type="match status" value="1"/>
</dbReference>
<dbReference type="Pfam" id="PF07408">
    <property type="entry name" value="DUF1507"/>
    <property type="match status" value="1"/>
</dbReference>
<dbReference type="SUPFAM" id="SSF140404">
    <property type="entry name" value="EF2458-like"/>
    <property type="match status" value="1"/>
</dbReference>